<dbReference type="EMBL" id="AY522331">
    <property type="protein sequence ID" value="AAS46179.1"/>
    <property type="molecule type" value="Genomic_DNA"/>
</dbReference>
<dbReference type="RefSeq" id="NP_039378.1">
    <property type="nucleotide sequence ID" value="NC_001320.1"/>
</dbReference>
<dbReference type="RefSeq" id="YP_009305299.1">
    <property type="nucleotide sequence ID" value="NC_031333.1"/>
</dbReference>
<dbReference type="SMR" id="P0C2Z9"/>
<dbReference type="GeneID" id="29141356"/>
<dbReference type="GeneID" id="3131392"/>
<dbReference type="KEGG" id="osa:3131392"/>
<dbReference type="GO" id="GO:0009535">
    <property type="term" value="C:chloroplast thylakoid membrane"/>
    <property type="evidence" value="ECO:0007669"/>
    <property type="project" value="UniProtKB-SubCell"/>
</dbReference>
<dbReference type="GO" id="GO:0009536">
    <property type="term" value="C:plastid"/>
    <property type="evidence" value="ECO:0000305"/>
    <property type="project" value="Gramene"/>
</dbReference>
<dbReference type="GO" id="GO:0045259">
    <property type="term" value="C:proton-transporting ATP synthase complex"/>
    <property type="evidence" value="ECO:0007669"/>
    <property type="project" value="UniProtKB-KW"/>
</dbReference>
<dbReference type="GO" id="GO:0033177">
    <property type="term" value="C:proton-transporting two-sector ATPase complex, proton-transporting domain"/>
    <property type="evidence" value="ECO:0007669"/>
    <property type="project" value="InterPro"/>
</dbReference>
<dbReference type="GO" id="GO:0008289">
    <property type="term" value="F:lipid binding"/>
    <property type="evidence" value="ECO:0007669"/>
    <property type="project" value="UniProtKB-KW"/>
</dbReference>
<dbReference type="GO" id="GO:0046933">
    <property type="term" value="F:proton-transporting ATP synthase activity, rotational mechanism"/>
    <property type="evidence" value="ECO:0007669"/>
    <property type="project" value="UniProtKB-UniRule"/>
</dbReference>
<dbReference type="CDD" id="cd18183">
    <property type="entry name" value="ATP-synt_Fo_c_ATPH"/>
    <property type="match status" value="1"/>
</dbReference>
<dbReference type="FunFam" id="1.20.20.10:FF:000001">
    <property type="entry name" value="ATP synthase subunit c, chloroplastic"/>
    <property type="match status" value="1"/>
</dbReference>
<dbReference type="Gene3D" id="1.20.20.10">
    <property type="entry name" value="F1F0 ATP synthase subunit C"/>
    <property type="match status" value="1"/>
</dbReference>
<dbReference type="HAMAP" id="MF_01396">
    <property type="entry name" value="ATP_synth_c_bact"/>
    <property type="match status" value="1"/>
</dbReference>
<dbReference type="InterPro" id="IPR005953">
    <property type="entry name" value="ATP_synth_csu_bac/chlpt"/>
</dbReference>
<dbReference type="InterPro" id="IPR000454">
    <property type="entry name" value="ATP_synth_F0_csu"/>
</dbReference>
<dbReference type="InterPro" id="IPR020537">
    <property type="entry name" value="ATP_synth_F0_csu_DDCD_BS"/>
</dbReference>
<dbReference type="InterPro" id="IPR038662">
    <property type="entry name" value="ATP_synth_F0_csu_sf"/>
</dbReference>
<dbReference type="InterPro" id="IPR002379">
    <property type="entry name" value="ATPase_proteolipid_c-like_dom"/>
</dbReference>
<dbReference type="InterPro" id="IPR035921">
    <property type="entry name" value="F/V-ATP_Csub_sf"/>
</dbReference>
<dbReference type="NCBIfam" id="TIGR01260">
    <property type="entry name" value="ATP_synt_c"/>
    <property type="match status" value="1"/>
</dbReference>
<dbReference type="NCBIfam" id="NF005608">
    <property type="entry name" value="PRK07354.1"/>
    <property type="match status" value="1"/>
</dbReference>
<dbReference type="PANTHER" id="PTHR10031">
    <property type="entry name" value="ATP SYNTHASE LIPID-BINDING PROTEIN, MITOCHONDRIAL"/>
    <property type="match status" value="1"/>
</dbReference>
<dbReference type="PANTHER" id="PTHR10031:SF0">
    <property type="entry name" value="ATPASE PROTEIN 9"/>
    <property type="match status" value="1"/>
</dbReference>
<dbReference type="Pfam" id="PF00137">
    <property type="entry name" value="ATP-synt_C"/>
    <property type="match status" value="1"/>
</dbReference>
<dbReference type="PRINTS" id="PR00124">
    <property type="entry name" value="ATPASEC"/>
</dbReference>
<dbReference type="SUPFAM" id="SSF81333">
    <property type="entry name" value="F1F0 ATP synthase subunit C"/>
    <property type="match status" value="1"/>
</dbReference>
<dbReference type="PROSITE" id="PS00605">
    <property type="entry name" value="ATPASE_C"/>
    <property type="match status" value="1"/>
</dbReference>
<proteinExistence type="inferred from homology"/>
<geneLocation type="chloroplast"/>
<name>ATPH_ORYSA</name>
<gene>
    <name evidence="1" type="primary">atpH</name>
    <name type="ORF">PA042</name>
</gene>
<keyword id="KW-0066">ATP synthesis</keyword>
<keyword id="KW-0138">CF(0)</keyword>
<keyword id="KW-0150">Chloroplast</keyword>
<keyword id="KW-0375">Hydrogen ion transport</keyword>
<keyword id="KW-0406">Ion transport</keyword>
<keyword id="KW-0446">Lipid-binding</keyword>
<keyword id="KW-0472">Membrane</keyword>
<keyword id="KW-0934">Plastid</keyword>
<keyword id="KW-0793">Thylakoid</keyword>
<keyword id="KW-0812">Transmembrane</keyword>
<keyword id="KW-1133">Transmembrane helix</keyword>
<keyword id="KW-0813">Transport</keyword>
<evidence type="ECO:0000255" key="1">
    <source>
        <dbReference type="HAMAP-Rule" id="MF_01396"/>
    </source>
</evidence>
<comment type="function">
    <text evidence="1">F(1)F(0) ATP synthase produces ATP from ADP in the presence of a proton or sodium gradient. F-type ATPases consist of two structural domains, F(1) containing the extramembraneous catalytic core and F(0) containing the membrane proton channel, linked together by a central stalk and a peripheral stalk. During catalysis, ATP synthesis in the catalytic domain of F(1) is coupled via a rotary mechanism of the central stalk subunits to proton translocation.</text>
</comment>
<comment type="function">
    <text evidence="1">Key component of the F(0) channel; it plays a direct role in translocation across the membrane. A homomeric c-ring of between 10-14 subunits forms the central stalk rotor element with the F(1) delta and epsilon subunits.</text>
</comment>
<comment type="subunit">
    <text evidence="1">F-type ATPases have 2 components, F(1) - the catalytic core - and F(0) - the membrane proton channel. F(1) has five subunits: alpha(3), beta(3), gamma(1), delta(1), epsilon(1). F(0) has four main subunits: a(1), b(1), b'(1) and c(10-14). The alpha and beta chains form an alternating ring which encloses part of the gamma chain. F(1) is attached to F(0) by a central stalk formed by the gamma and epsilon chains, while a peripheral stalk is formed by the delta, b and b' chains.</text>
</comment>
<comment type="subcellular location">
    <subcellularLocation>
        <location evidence="1">Plastid</location>
        <location evidence="1">Chloroplast thylakoid membrane</location>
        <topology evidence="1">Multi-pass membrane protein</topology>
    </subcellularLocation>
</comment>
<comment type="miscellaneous">
    <text>In plastids the F-type ATPase is also known as CF(1)CF(0).</text>
</comment>
<comment type="similarity">
    <text evidence="1">Belongs to the ATPase C chain family.</text>
</comment>
<sequence>MNPLIAAASVIAAGLAVGLASIGPGVGQGTAAGQAVEGIARQPEAEGKIRGTLLLSLAFMEALTIYGLVVALALLFANPFV</sequence>
<feature type="chain" id="PRO_0000112199" description="ATP synthase subunit c, chloroplastic">
    <location>
        <begin position="1"/>
        <end position="81"/>
    </location>
</feature>
<feature type="transmembrane region" description="Helical" evidence="1">
    <location>
        <begin position="3"/>
        <end position="23"/>
    </location>
</feature>
<feature type="transmembrane region" description="Helical" evidence="1">
    <location>
        <begin position="57"/>
        <end position="77"/>
    </location>
</feature>
<feature type="site" description="Reversibly protonated during proton transport" evidence="1">
    <location>
        <position position="61"/>
    </location>
</feature>
<reference key="1">
    <citation type="journal article" date="2004" name="Plant Physiol.">
        <title>A comparison of rice chloroplast genomes.</title>
        <authorList>
            <person name="Tang J."/>
            <person name="Xia H."/>
            <person name="Cao M."/>
            <person name="Zhang X."/>
            <person name="Zeng W."/>
            <person name="Hu S."/>
            <person name="Tong W."/>
            <person name="Wang J."/>
            <person name="Wang J."/>
            <person name="Yu J."/>
            <person name="Yang H."/>
            <person name="Zhu L."/>
        </authorList>
    </citation>
    <scope>NUCLEOTIDE SEQUENCE [LARGE SCALE GENOMIC DNA]</scope>
    <source>
        <strain>cv. PA64s</strain>
    </source>
</reference>
<accession>P0C2Z9</accession>
<accession>P00843</accession>
<accession>P69450</accession>
<accession>Q33180</accession>
<accession>Q6QY78</accession>
<accession>Q7G7F1</accession>
<accession>Q9XPT1</accession>
<protein>
    <recommendedName>
        <fullName evidence="1">ATP synthase subunit c, chloroplastic</fullName>
    </recommendedName>
    <alternativeName>
        <fullName evidence="1">ATP synthase F(0) sector subunit c</fullName>
    </alternativeName>
    <alternativeName>
        <fullName evidence="1">ATPase subunit III</fullName>
    </alternativeName>
    <alternativeName>
        <fullName evidence="1">F-type ATPase subunit c</fullName>
        <shortName evidence="1">F-ATPase subunit c</shortName>
    </alternativeName>
    <alternativeName>
        <fullName evidence="1">Lipid-binding protein</fullName>
    </alternativeName>
</protein>
<organism>
    <name type="scientific">Oryza sativa</name>
    <name type="common">Rice</name>
    <dbReference type="NCBI Taxonomy" id="4530"/>
    <lineage>
        <taxon>Eukaryota</taxon>
        <taxon>Viridiplantae</taxon>
        <taxon>Streptophyta</taxon>
        <taxon>Embryophyta</taxon>
        <taxon>Tracheophyta</taxon>
        <taxon>Spermatophyta</taxon>
        <taxon>Magnoliopsida</taxon>
        <taxon>Liliopsida</taxon>
        <taxon>Poales</taxon>
        <taxon>Poaceae</taxon>
        <taxon>BOP clade</taxon>
        <taxon>Oryzoideae</taxon>
        <taxon>Oryzeae</taxon>
        <taxon>Oryzinae</taxon>
        <taxon>Oryza</taxon>
    </lineage>
</organism>